<gene>
    <name evidence="1" type="primary">rpsJ</name>
    <name type="ordered locus">Cbei_0150</name>
</gene>
<keyword id="KW-0687">Ribonucleoprotein</keyword>
<keyword id="KW-0689">Ribosomal protein</keyword>
<reference key="1">
    <citation type="submission" date="2007-06" db="EMBL/GenBank/DDBJ databases">
        <title>Complete sequence of Clostridium beijerinckii NCIMB 8052.</title>
        <authorList>
            <consortium name="US DOE Joint Genome Institute"/>
            <person name="Copeland A."/>
            <person name="Lucas S."/>
            <person name="Lapidus A."/>
            <person name="Barry K."/>
            <person name="Detter J.C."/>
            <person name="Glavina del Rio T."/>
            <person name="Hammon N."/>
            <person name="Israni S."/>
            <person name="Dalin E."/>
            <person name="Tice H."/>
            <person name="Pitluck S."/>
            <person name="Sims D."/>
            <person name="Brettin T."/>
            <person name="Bruce D."/>
            <person name="Tapia R."/>
            <person name="Brainard J."/>
            <person name="Schmutz J."/>
            <person name="Larimer F."/>
            <person name="Land M."/>
            <person name="Hauser L."/>
            <person name="Kyrpides N."/>
            <person name="Mikhailova N."/>
            <person name="Bennet G."/>
            <person name="Cann I."/>
            <person name="Chen J.-S."/>
            <person name="Contreras A.L."/>
            <person name="Jones D."/>
            <person name="Kashket E."/>
            <person name="Mitchell W."/>
            <person name="Stoddard S."/>
            <person name="Schwarz W."/>
            <person name="Qureshi N."/>
            <person name="Young M."/>
            <person name="Shi Z."/>
            <person name="Ezeji T."/>
            <person name="White B."/>
            <person name="Blaschek H."/>
            <person name="Richardson P."/>
        </authorList>
    </citation>
    <scope>NUCLEOTIDE SEQUENCE [LARGE SCALE GENOMIC DNA]</scope>
    <source>
        <strain>ATCC 51743 / NCIMB 8052</strain>
    </source>
</reference>
<accession>A6LPR0</accession>
<feature type="chain" id="PRO_1000081543" description="Small ribosomal subunit protein uS10">
    <location>
        <begin position="1"/>
        <end position="102"/>
    </location>
</feature>
<organism>
    <name type="scientific">Clostridium beijerinckii (strain ATCC 51743 / NCIMB 8052)</name>
    <name type="common">Clostridium acetobutylicum</name>
    <dbReference type="NCBI Taxonomy" id="290402"/>
    <lineage>
        <taxon>Bacteria</taxon>
        <taxon>Bacillati</taxon>
        <taxon>Bacillota</taxon>
        <taxon>Clostridia</taxon>
        <taxon>Eubacteriales</taxon>
        <taxon>Clostridiaceae</taxon>
        <taxon>Clostridium</taxon>
    </lineage>
</organism>
<comment type="function">
    <text evidence="1">Involved in the binding of tRNA to the ribosomes.</text>
</comment>
<comment type="subunit">
    <text evidence="1">Part of the 30S ribosomal subunit.</text>
</comment>
<comment type="similarity">
    <text evidence="1">Belongs to the universal ribosomal protein uS10 family.</text>
</comment>
<dbReference type="EMBL" id="CP000721">
    <property type="protein sequence ID" value="ABR32340.1"/>
    <property type="molecule type" value="Genomic_DNA"/>
</dbReference>
<dbReference type="RefSeq" id="WP_002582605.1">
    <property type="nucleotide sequence ID" value="NC_009617.1"/>
</dbReference>
<dbReference type="SMR" id="A6LPR0"/>
<dbReference type="GeneID" id="92945893"/>
<dbReference type="KEGG" id="cbe:Cbei_0150"/>
<dbReference type="eggNOG" id="COG0051">
    <property type="taxonomic scope" value="Bacteria"/>
</dbReference>
<dbReference type="HOGENOM" id="CLU_122625_1_3_9"/>
<dbReference type="Proteomes" id="UP000000565">
    <property type="component" value="Chromosome"/>
</dbReference>
<dbReference type="GO" id="GO:1990904">
    <property type="term" value="C:ribonucleoprotein complex"/>
    <property type="evidence" value="ECO:0007669"/>
    <property type="project" value="UniProtKB-KW"/>
</dbReference>
<dbReference type="GO" id="GO:0005840">
    <property type="term" value="C:ribosome"/>
    <property type="evidence" value="ECO:0007669"/>
    <property type="project" value="UniProtKB-KW"/>
</dbReference>
<dbReference type="GO" id="GO:0003735">
    <property type="term" value="F:structural constituent of ribosome"/>
    <property type="evidence" value="ECO:0007669"/>
    <property type="project" value="InterPro"/>
</dbReference>
<dbReference type="GO" id="GO:0000049">
    <property type="term" value="F:tRNA binding"/>
    <property type="evidence" value="ECO:0007669"/>
    <property type="project" value="UniProtKB-UniRule"/>
</dbReference>
<dbReference type="GO" id="GO:0006412">
    <property type="term" value="P:translation"/>
    <property type="evidence" value="ECO:0007669"/>
    <property type="project" value="UniProtKB-UniRule"/>
</dbReference>
<dbReference type="FunFam" id="3.30.70.600:FF:000001">
    <property type="entry name" value="30S ribosomal protein S10"/>
    <property type="match status" value="1"/>
</dbReference>
<dbReference type="Gene3D" id="3.30.70.600">
    <property type="entry name" value="Ribosomal protein S10 domain"/>
    <property type="match status" value="1"/>
</dbReference>
<dbReference type="HAMAP" id="MF_00508">
    <property type="entry name" value="Ribosomal_uS10"/>
    <property type="match status" value="1"/>
</dbReference>
<dbReference type="InterPro" id="IPR001848">
    <property type="entry name" value="Ribosomal_uS10"/>
</dbReference>
<dbReference type="InterPro" id="IPR018268">
    <property type="entry name" value="Ribosomal_uS10_CS"/>
</dbReference>
<dbReference type="InterPro" id="IPR027486">
    <property type="entry name" value="Ribosomal_uS10_dom"/>
</dbReference>
<dbReference type="InterPro" id="IPR036838">
    <property type="entry name" value="Ribosomal_uS10_dom_sf"/>
</dbReference>
<dbReference type="NCBIfam" id="NF001861">
    <property type="entry name" value="PRK00596.1"/>
    <property type="match status" value="1"/>
</dbReference>
<dbReference type="NCBIfam" id="TIGR01049">
    <property type="entry name" value="rpsJ_bact"/>
    <property type="match status" value="1"/>
</dbReference>
<dbReference type="PANTHER" id="PTHR11700">
    <property type="entry name" value="30S RIBOSOMAL PROTEIN S10 FAMILY MEMBER"/>
    <property type="match status" value="1"/>
</dbReference>
<dbReference type="Pfam" id="PF00338">
    <property type="entry name" value="Ribosomal_S10"/>
    <property type="match status" value="1"/>
</dbReference>
<dbReference type="PRINTS" id="PR00971">
    <property type="entry name" value="RIBOSOMALS10"/>
</dbReference>
<dbReference type="SMART" id="SM01403">
    <property type="entry name" value="Ribosomal_S10"/>
    <property type="match status" value="1"/>
</dbReference>
<dbReference type="SUPFAM" id="SSF54999">
    <property type="entry name" value="Ribosomal protein S10"/>
    <property type="match status" value="1"/>
</dbReference>
<dbReference type="PROSITE" id="PS00361">
    <property type="entry name" value="RIBOSOMAL_S10"/>
    <property type="match status" value="1"/>
</dbReference>
<sequence>MSKQKIRIRLKAFDHTILDQSAEKIVETAKTSGAKVVGPVPLPTEKDVVTILRAVHKYKDSREQFEIRTHKRLIDIVNPSPKTVDALMRLNLPAGVDIEIKL</sequence>
<evidence type="ECO:0000255" key="1">
    <source>
        <dbReference type="HAMAP-Rule" id="MF_00508"/>
    </source>
</evidence>
<evidence type="ECO:0000305" key="2"/>
<name>RS10_CLOB8</name>
<proteinExistence type="inferred from homology"/>
<protein>
    <recommendedName>
        <fullName evidence="1">Small ribosomal subunit protein uS10</fullName>
    </recommendedName>
    <alternativeName>
        <fullName evidence="2">30S ribosomal protein S10</fullName>
    </alternativeName>
</protein>